<proteinExistence type="inferred from homology"/>
<feature type="chain" id="PRO_1000166924" description="Large ribosomal subunit protein uL14">
    <location>
        <begin position="1"/>
        <end position="122"/>
    </location>
</feature>
<evidence type="ECO:0000255" key="1">
    <source>
        <dbReference type="HAMAP-Rule" id="MF_01367"/>
    </source>
</evidence>
<evidence type="ECO:0000305" key="2"/>
<dbReference type="EMBL" id="CP001098">
    <property type="protein sequence ID" value="ACL68888.1"/>
    <property type="molecule type" value="Genomic_DNA"/>
</dbReference>
<dbReference type="RefSeq" id="WP_012635086.1">
    <property type="nucleotide sequence ID" value="NC_011899.1"/>
</dbReference>
<dbReference type="SMR" id="B8D0D4"/>
<dbReference type="STRING" id="373903.Hore_01270"/>
<dbReference type="KEGG" id="hor:Hore_01270"/>
<dbReference type="eggNOG" id="COG0093">
    <property type="taxonomic scope" value="Bacteria"/>
</dbReference>
<dbReference type="HOGENOM" id="CLU_095071_2_1_9"/>
<dbReference type="OrthoDB" id="9806379at2"/>
<dbReference type="Proteomes" id="UP000000719">
    <property type="component" value="Chromosome"/>
</dbReference>
<dbReference type="GO" id="GO:0022625">
    <property type="term" value="C:cytosolic large ribosomal subunit"/>
    <property type="evidence" value="ECO:0007669"/>
    <property type="project" value="TreeGrafter"/>
</dbReference>
<dbReference type="GO" id="GO:0070180">
    <property type="term" value="F:large ribosomal subunit rRNA binding"/>
    <property type="evidence" value="ECO:0007669"/>
    <property type="project" value="TreeGrafter"/>
</dbReference>
<dbReference type="GO" id="GO:0003735">
    <property type="term" value="F:structural constituent of ribosome"/>
    <property type="evidence" value="ECO:0007669"/>
    <property type="project" value="InterPro"/>
</dbReference>
<dbReference type="GO" id="GO:0006412">
    <property type="term" value="P:translation"/>
    <property type="evidence" value="ECO:0007669"/>
    <property type="project" value="UniProtKB-UniRule"/>
</dbReference>
<dbReference type="CDD" id="cd00337">
    <property type="entry name" value="Ribosomal_uL14"/>
    <property type="match status" value="1"/>
</dbReference>
<dbReference type="FunFam" id="2.40.150.20:FF:000001">
    <property type="entry name" value="50S ribosomal protein L14"/>
    <property type="match status" value="1"/>
</dbReference>
<dbReference type="Gene3D" id="2.40.150.20">
    <property type="entry name" value="Ribosomal protein L14"/>
    <property type="match status" value="1"/>
</dbReference>
<dbReference type="HAMAP" id="MF_01367">
    <property type="entry name" value="Ribosomal_uL14"/>
    <property type="match status" value="1"/>
</dbReference>
<dbReference type="InterPro" id="IPR000218">
    <property type="entry name" value="Ribosomal_uL14"/>
</dbReference>
<dbReference type="InterPro" id="IPR005745">
    <property type="entry name" value="Ribosomal_uL14_bac-type"/>
</dbReference>
<dbReference type="InterPro" id="IPR019972">
    <property type="entry name" value="Ribosomal_uL14_CS"/>
</dbReference>
<dbReference type="InterPro" id="IPR036853">
    <property type="entry name" value="Ribosomal_uL14_sf"/>
</dbReference>
<dbReference type="NCBIfam" id="TIGR01067">
    <property type="entry name" value="rplN_bact"/>
    <property type="match status" value="1"/>
</dbReference>
<dbReference type="PANTHER" id="PTHR11761">
    <property type="entry name" value="50S/60S RIBOSOMAL PROTEIN L14/L23"/>
    <property type="match status" value="1"/>
</dbReference>
<dbReference type="PANTHER" id="PTHR11761:SF3">
    <property type="entry name" value="LARGE RIBOSOMAL SUBUNIT PROTEIN UL14M"/>
    <property type="match status" value="1"/>
</dbReference>
<dbReference type="Pfam" id="PF00238">
    <property type="entry name" value="Ribosomal_L14"/>
    <property type="match status" value="1"/>
</dbReference>
<dbReference type="SMART" id="SM01374">
    <property type="entry name" value="Ribosomal_L14"/>
    <property type="match status" value="1"/>
</dbReference>
<dbReference type="SUPFAM" id="SSF50193">
    <property type="entry name" value="Ribosomal protein L14"/>
    <property type="match status" value="1"/>
</dbReference>
<dbReference type="PROSITE" id="PS00049">
    <property type="entry name" value="RIBOSOMAL_L14"/>
    <property type="match status" value="1"/>
</dbReference>
<reference key="1">
    <citation type="journal article" date="2009" name="PLoS ONE">
        <title>Genome analysis of the anaerobic thermohalophilic bacterium Halothermothrix orenii.</title>
        <authorList>
            <person name="Mavromatis K."/>
            <person name="Ivanova N."/>
            <person name="Anderson I."/>
            <person name="Lykidis A."/>
            <person name="Hooper S.D."/>
            <person name="Sun H."/>
            <person name="Kunin V."/>
            <person name="Lapidus A."/>
            <person name="Hugenholtz P."/>
            <person name="Patel B."/>
            <person name="Kyrpides N.C."/>
        </authorList>
    </citation>
    <scope>NUCLEOTIDE SEQUENCE [LARGE SCALE GENOMIC DNA]</scope>
    <source>
        <strain>H 168 / OCM 544 / DSM 9562</strain>
    </source>
</reference>
<name>RL14_HALOH</name>
<accession>B8D0D4</accession>
<sequence length="122" mass="13462">MIQAESRLRVADNTGARELLCIRVLGGSRKRYAGVGDIIVATVKEAIPDGMVKKGEVVKAVVVRTKKETRRPDGSYIKFDENAAVLIDKANNPRGTRIFGPVARELREKNFMKIISLAPEVL</sequence>
<gene>
    <name evidence="1" type="primary">rplN</name>
    <name type="ordered locus">Hore_01270</name>
</gene>
<keyword id="KW-1185">Reference proteome</keyword>
<keyword id="KW-0687">Ribonucleoprotein</keyword>
<keyword id="KW-0689">Ribosomal protein</keyword>
<keyword id="KW-0694">RNA-binding</keyword>
<keyword id="KW-0699">rRNA-binding</keyword>
<organism>
    <name type="scientific">Halothermothrix orenii (strain H 168 / OCM 544 / DSM 9562)</name>
    <dbReference type="NCBI Taxonomy" id="373903"/>
    <lineage>
        <taxon>Bacteria</taxon>
        <taxon>Bacillati</taxon>
        <taxon>Bacillota</taxon>
        <taxon>Clostridia</taxon>
        <taxon>Halanaerobiales</taxon>
        <taxon>Halothermotrichaceae</taxon>
        <taxon>Halothermothrix</taxon>
    </lineage>
</organism>
<comment type="function">
    <text evidence="1">Binds to 23S rRNA. Forms part of two intersubunit bridges in the 70S ribosome.</text>
</comment>
<comment type="subunit">
    <text evidence="1">Part of the 50S ribosomal subunit. Forms a cluster with proteins L3 and L19. In the 70S ribosome, L14 and L19 interact and together make contacts with the 16S rRNA in bridges B5 and B8.</text>
</comment>
<comment type="similarity">
    <text evidence="1">Belongs to the universal ribosomal protein uL14 family.</text>
</comment>
<protein>
    <recommendedName>
        <fullName evidence="1">Large ribosomal subunit protein uL14</fullName>
    </recommendedName>
    <alternativeName>
        <fullName evidence="2">50S ribosomal protein L14</fullName>
    </alternativeName>
</protein>